<proteinExistence type="inferred from homology"/>
<reference key="1">
    <citation type="journal article" date="2006" name="PLoS Genet.">
        <title>Comparative genomics of emerging human ehrlichiosis agents.</title>
        <authorList>
            <person name="Dunning Hotopp J.C."/>
            <person name="Lin M."/>
            <person name="Madupu R."/>
            <person name="Crabtree J."/>
            <person name="Angiuoli S.V."/>
            <person name="Eisen J.A."/>
            <person name="Seshadri R."/>
            <person name="Ren Q."/>
            <person name="Wu M."/>
            <person name="Utterback T.R."/>
            <person name="Smith S."/>
            <person name="Lewis M."/>
            <person name="Khouri H."/>
            <person name="Zhang C."/>
            <person name="Niu H."/>
            <person name="Lin Q."/>
            <person name="Ohashi N."/>
            <person name="Zhi N."/>
            <person name="Nelson W.C."/>
            <person name="Brinkac L.M."/>
            <person name="Dodson R.J."/>
            <person name="Rosovitz M.J."/>
            <person name="Sundaram J.P."/>
            <person name="Daugherty S.C."/>
            <person name="Davidsen T."/>
            <person name="Durkin A.S."/>
            <person name="Gwinn M.L."/>
            <person name="Haft D.H."/>
            <person name="Selengut J.D."/>
            <person name="Sullivan S.A."/>
            <person name="Zafar N."/>
            <person name="Zhou L."/>
            <person name="Benahmed F."/>
            <person name="Forberger H."/>
            <person name="Halpin R."/>
            <person name="Mulligan S."/>
            <person name="Robinson J."/>
            <person name="White O."/>
            <person name="Rikihisa Y."/>
            <person name="Tettelin H."/>
        </authorList>
    </citation>
    <scope>NUCLEOTIDE SEQUENCE [LARGE SCALE GENOMIC DNA]</scope>
    <source>
        <strain>ATCC CRL-10679 / Arkansas</strain>
    </source>
</reference>
<organism>
    <name type="scientific">Ehrlichia chaffeensis (strain ATCC CRL-10679 / Arkansas)</name>
    <dbReference type="NCBI Taxonomy" id="205920"/>
    <lineage>
        <taxon>Bacteria</taxon>
        <taxon>Pseudomonadati</taxon>
        <taxon>Pseudomonadota</taxon>
        <taxon>Alphaproteobacteria</taxon>
        <taxon>Rickettsiales</taxon>
        <taxon>Anaplasmataceae</taxon>
        <taxon>Ehrlichia</taxon>
    </lineage>
</organism>
<protein>
    <recommendedName>
        <fullName evidence="1">DNA ligase</fullName>
        <ecNumber evidence="1">6.5.1.2</ecNumber>
    </recommendedName>
    <alternativeName>
        <fullName evidence="1">Polydeoxyribonucleotide synthase [NAD(+)]</fullName>
    </alternativeName>
</protein>
<name>DNLJ_EHRCR</name>
<accession>Q2GHG1</accession>
<keyword id="KW-0227">DNA damage</keyword>
<keyword id="KW-0234">DNA repair</keyword>
<keyword id="KW-0235">DNA replication</keyword>
<keyword id="KW-0436">Ligase</keyword>
<keyword id="KW-0460">Magnesium</keyword>
<keyword id="KW-0464">Manganese</keyword>
<keyword id="KW-0479">Metal-binding</keyword>
<keyword id="KW-0520">NAD</keyword>
<keyword id="KW-1185">Reference proteome</keyword>
<keyword id="KW-0862">Zinc</keyword>
<evidence type="ECO:0000255" key="1">
    <source>
        <dbReference type="HAMAP-Rule" id="MF_01588"/>
    </source>
</evidence>
<comment type="function">
    <text evidence="1">DNA ligase that catalyzes the formation of phosphodiester linkages between 5'-phosphoryl and 3'-hydroxyl groups in double-stranded DNA using NAD as a coenzyme and as the energy source for the reaction. It is essential for DNA replication and repair of damaged DNA.</text>
</comment>
<comment type="catalytic activity">
    <reaction evidence="1">
        <text>NAD(+) + (deoxyribonucleotide)n-3'-hydroxyl + 5'-phospho-(deoxyribonucleotide)m = (deoxyribonucleotide)n+m + AMP + beta-nicotinamide D-nucleotide.</text>
        <dbReference type="EC" id="6.5.1.2"/>
    </reaction>
</comment>
<comment type="cofactor">
    <cofactor evidence="1">
        <name>Mg(2+)</name>
        <dbReference type="ChEBI" id="CHEBI:18420"/>
    </cofactor>
    <cofactor evidence="1">
        <name>Mn(2+)</name>
        <dbReference type="ChEBI" id="CHEBI:29035"/>
    </cofactor>
</comment>
<comment type="similarity">
    <text evidence="1">Belongs to the NAD-dependent DNA ligase family. LigA subfamily.</text>
</comment>
<feature type="chain" id="PRO_0000313224" description="DNA ligase">
    <location>
        <begin position="1"/>
        <end position="676"/>
    </location>
</feature>
<feature type="domain" description="BRCT" evidence="1">
    <location>
        <begin position="595"/>
        <end position="676"/>
    </location>
</feature>
<feature type="active site" description="N6-AMP-lysine intermediate" evidence="1">
    <location>
        <position position="120"/>
    </location>
</feature>
<feature type="binding site" evidence="1">
    <location>
        <begin position="35"/>
        <end position="39"/>
    </location>
    <ligand>
        <name>NAD(+)</name>
        <dbReference type="ChEBI" id="CHEBI:57540"/>
    </ligand>
</feature>
<feature type="binding site" evidence="1">
    <location>
        <begin position="84"/>
        <end position="85"/>
    </location>
    <ligand>
        <name>NAD(+)</name>
        <dbReference type="ChEBI" id="CHEBI:57540"/>
    </ligand>
</feature>
<feature type="binding site" evidence="1">
    <location>
        <position position="118"/>
    </location>
    <ligand>
        <name>NAD(+)</name>
        <dbReference type="ChEBI" id="CHEBI:57540"/>
    </ligand>
</feature>
<feature type="binding site" evidence="1">
    <location>
        <position position="141"/>
    </location>
    <ligand>
        <name>NAD(+)</name>
        <dbReference type="ChEBI" id="CHEBI:57540"/>
    </ligand>
</feature>
<feature type="binding site" evidence="1">
    <location>
        <position position="176"/>
    </location>
    <ligand>
        <name>NAD(+)</name>
        <dbReference type="ChEBI" id="CHEBI:57540"/>
    </ligand>
</feature>
<feature type="binding site" evidence="1">
    <location>
        <position position="284"/>
    </location>
    <ligand>
        <name>NAD(+)</name>
        <dbReference type="ChEBI" id="CHEBI:57540"/>
    </ligand>
</feature>
<feature type="binding site" evidence="1">
    <location>
        <position position="308"/>
    </location>
    <ligand>
        <name>NAD(+)</name>
        <dbReference type="ChEBI" id="CHEBI:57540"/>
    </ligand>
</feature>
<feature type="binding site" evidence="1">
    <location>
        <position position="402"/>
    </location>
    <ligand>
        <name>Zn(2+)</name>
        <dbReference type="ChEBI" id="CHEBI:29105"/>
    </ligand>
</feature>
<feature type="binding site" evidence="1">
    <location>
        <position position="405"/>
    </location>
    <ligand>
        <name>Zn(2+)</name>
        <dbReference type="ChEBI" id="CHEBI:29105"/>
    </ligand>
</feature>
<feature type="binding site" evidence="1">
    <location>
        <position position="420"/>
    </location>
    <ligand>
        <name>Zn(2+)</name>
        <dbReference type="ChEBI" id="CHEBI:29105"/>
    </ligand>
</feature>
<feature type="binding site" evidence="1">
    <location>
        <position position="426"/>
    </location>
    <ligand>
        <name>Zn(2+)</name>
        <dbReference type="ChEBI" id="CHEBI:29105"/>
    </ligand>
</feature>
<sequence length="676" mass="76930">MVDQEKAKLELDKLNKQIQHHDVLYYVQDNPEISDAEYDELCRKRNLILNAFPKLTQSNDYQNNIGSSPDTKFAKVKHEEKMFSLDNAFNQQDVEKFITRTKKFLNINDNQSIPLSCELKIDGLSFSVIYKKGEIYQASTRGNGYFGENITTNVKTIKNLPHIIHNAPDLLEVRGEIYIDRCDFIQLNNDGNNFANPRNAAAGSVRQLDHNITAQRKLKYFMYTIVNTACLTQEELLYQLKIWGFCVNEHTITTDNIEEAFNFYNQVYNNRSNINYDIDGIIYKVNDIKSQHILGTTSKSPRWAIAYKFPAAEAKTQLNKISIQIGRTGVLTPIAELSPINIGGVIVTRASLHNKNEIERKDIREGDYVIVKRAGDVIPQIVDVDKNLRTQELTKFVFPTTCPSCGSSVYQAKQEASIYCTGELFCKDQILEKIKHFVSKDAFNIIGFGKKQLLFFYEQRLITNITDIFTLEEKISNSDVKLESLHGWGEKSMSNLFSAINNSKVISLENFIFALGIRFIGKYIAKILANHFSSYETWYNEMLKLAQNEDYSLNIQQIGSKTIGSLKMFFSQPHNLNMINDLVKHLTITDTQSSSYLSLIHGKIIVFTGELSSMSRSEAKIRSETAGAKVSSSLSKNTDFLIAGNNPGSKYKKAQSLNVQILTEDLWLQYTQSSEN</sequence>
<dbReference type="EC" id="6.5.1.2" evidence="1"/>
<dbReference type="EMBL" id="CP000236">
    <property type="protein sequence ID" value="ABD45317.1"/>
    <property type="molecule type" value="Genomic_DNA"/>
</dbReference>
<dbReference type="RefSeq" id="WP_011452522.1">
    <property type="nucleotide sequence ID" value="NC_007799.1"/>
</dbReference>
<dbReference type="SMR" id="Q2GHG1"/>
<dbReference type="STRING" id="205920.ECH_0301"/>
<dbReference type="KEGG" id="ech:ECH_0301"/>
<dbReference type="eggNOG" id="COG0272">
    <property type="taxonomic scope" value="Bacteria"/>
</dbReference>
<dbReference type="HOGENOM" id="CLU_007764_2_1_5"/>
<dbReference type="OrthoDB" id="9759736at2"/>
<dbReference type="Proteomes" id="UP000008320">
    <property type="component" value="Chromosome"/>
</dbReference>
<dbReference type="GO" id="GO:0005829">
    <property type="term" value="C:cytosol"/>
    <property type="evidence" value="ECO:0007669"/>
    <property type="project" value="TreeGrafter"/>
</dbReference>
<dbReference type="GO" id="GO:0003911">
    <property type="term" value="F:DNA ligase (NAD+) activity"/>
    <property type="evidence" value="ECO:0007669"/>
    <property type="project" value="UniProtKB-UniRule"/>
</dbReference>
<dbReference type="GO" id="GO:0046872">
    <property type="term" value="F:metal ion binding"/>
    <property type="evidence" value="ECO:0007669"/>
    <property type="project" value="UniProtKB-KW"/>
</dbReference>
<dbReference type="GO" id="GO:0006281">
    <property type="term" value="P:DNA repair"/>
    <property type="evidence" value="ECO:0007669"/>
    <property type="project" value="UniProtKB-KW"/>
</dbReference>
<dbReference type="GO" id="GO:0006260">
    <property type="term" value="P:DNA replication"/>
    <property type="evidence" value="ECO:0007669"/>
    <property type="project" value="UniProtKB-KW"/>
</dbReference>
<dbReference type="CDD" id="cd17748">
    <property type="entry name" value="BRCT_DNA_ligase_like"/>
    <property type="match status" value="1"/>
</dbReference>
<dbReference type="CDD" id="cd00114">
    <property type="entry name" value="LIGANc"/>
    <property type="match status" value="1"/>
</dbReference>
<dbReference type="FunFam" id="2.40.50.140:FF:000012">
    <property type="entry name" value="DNA ligase"/>
    <property type="match status" value="1"/>
</dbReference>
<dbReference type="Gene3D" id="6.20.10.30">
    <property type="match status" value="1"/>
</dbReference>
<dbReference type="Gene3D" id="1.10.150.20">
    <property type="entry name" value="5' to 3' exonuclease, C-terminal subdomain"/>
    <property type="match status" value="2"/>
</dbReference>
<dbReference type="Gene3D" id="3.40.50.10190">
    <property type="entry name" value="BRCT domain"/>
    <property type="match status" value="1"/>
</dbReference>
<dbReference type="Gene3D" id="3.30.470.30">
    <property type="entry name" value="DNA ligase/mRNA capping enzyme"/>
    <property type="match status" value="1"/>
</dbReference>
<dbReference type="Gene3D" id="1.10.287.610">
    <property type="entry name" value="Helix hairpin bin"/>
    <property type="match status" value="1"/>
</dbReference>
<dbReference type="Gene3D" id="2.40.50.140">
    <property type="entry name" value="Nucleic acid-binding proteins"/>
    <property type="match status" value="1"/>
</dbReference>
<dbReference type="HAMAP" id="MF_01588">
    <property type="entry name" value="DNA_ligase_A"/>
    <property type="match status" value="1"/>
</dbReference>
<dbReference type="InterPro" id="IPR001357">
    <property type="entry name" value="BRCT_dom"/>
</dbReference>
<dbReference type="InterPro" id="IPR036420">
    <property type="entry name" value="BRCT_dom_sf"/>
</dbReference>
<dbReference type="InterPro" id="IPR041663">
    <property type="entry name" value="DisA/LigA_HHH"/>
</dbReference>
<dbReference type="InterPro" id="IPR001679">
    <property type="entry name" value="DNA_ligase"/>
</dbReference>
<dbReference type="InterPro" id="IPR013839">
    <property type="entry name" value="DNAligase_adenylation"/>
</dbReference>
<dbReference type="InterPro" id="IPR013840">
    <property type="entry name" value="DNAligase_N"/>
</dbReference>
<dbReference type="InterPro" id="IPR012340">
    <property type="entry name" value="NA-bd_OB-fold"/>
</dbReference>
<dbReference type="InterPro" id="IPR004150">
    <property type="entry name" value="NAD_DNA_ligase_OB"/>
</dbReference>
<dbReference type="InterPro" id="IPR010994">
    <property type="entry name" value="RuvA_2-like"/>
</dbReference>
<dbReference type="InterPro" id="IPR004149">
    <property type="entry name" value="Znf_DNAligase_C4"/>
</dbReference>
<dbReference type="NCBIfam" id="TIGR00575">
    <property type="entry name" value="dnlj"/>
    <property type="match status" value="1"/>
</dbReference>
<dbReference type="NCBIfam" id="NF005932">
    <property type="entry name" value="PRK07956.1"/>
    <property type="match status" value="1"/>
</dbReference>
<dbReference type="PANTHER" id="PTHR23389">
    <property type="entry name" value="CHROMOSOME TRANSMISSION FIDELITY FACTOR 18"/>
    <property type="match status" value="1"/>
</dbReference>
<dbReference type="PANTHER" id="PTHR23389:SF9">
    <property type="entry name" value="DNA LIGASE"/>
    <property type="match status" value="1"/>
</dbReference>
<dbReference type="Pfam" id="PF00533">
    <property type="entry name" value="BRCT"/>
    <property type="match status" value="1"/>
</dbReference>
<dbReference type="Pfam" id="PF01653">
    <property type="entry name" value="DNA_ligase_aden"/>
    <property type="match status" value="1"/>
</dbReference>
<dbReference type="Pfam" id="PF03120">
    <property type="entry name" value="DNA_ligase_OB"/>
    <property type="match status" value="1"/>
</dbReference>
<dbReference type="Pfam" id="PF03119">
    <property type="entry name" value="DNA_ligase_ZBD"/>
    <property type="match status" value="1"/>
</dbReference>
<dbReference type="Pfam" id="PF12826">
    <property type="entry name" value="HHH_2"/>
    <property type="match status" value="1"/>
</dbReference>
<dbReference type="Pfam" id="PF22745">
    <property type="entry name" value="Nlig-Ia"/>
    <property type="match status" value="1"/>
</dbReference>
<dbReference type="PIRSF" id="PIRSF001604">
    <property type="entry name" value="LigA"/>
    <property type="match status" value="1"/>
</dbReference>
<dbReference type="SMART" id="SM00292">
    <property type="entry name" value="BRCT"/>
    <property type="match status" value="1"/>
</dbReference>
<dbReference type="SMART" id="SM00532">
    <property type="entry name" value="LIGANc"/>
    <property type="match status" value="1"/>
</dbReference>
<dbReference type="SUPFAM" id="SSF52113">
    <property type="entry name" value="BRCT domain"/>
    <property type="match status" value="1"/>
</dbReference>
<dbReference type="SUPFAM" id="SSF56091">
    <property type="entry name" value="DNA ligase/mRNA capping enzyme, catalytic domain"/>
    <property type="match status" value="1"/>
</dbReference>
<dbReference type="SUPFAM" id="SSF50249">
    <property type="entry name" value="Nucleic acid-binding proteins"/>
    <property type="match status" value="1"/>
</dbReference>
<dbReference type="SUPFAM" id="SSF47781">
    <property type="entry name" value="RuvA domain 2-like"/>
    <property type="match status" value="1"/>
</dbReference>
<dbReference type="PROSITE" id="PS50172">
    <property type="entry name" value="BRCT"/>
    <property type="match status" value="1"/>
</dbReference>
<gene>
    <name evidence="1" type="primary">ligA</name>
    <name type="ordered locus">ECH_0301</name>
</gene>